<comment type="function">
    <text evidence="1">NAD-binding protein involved in the addition of a carboxymethylaminomethyl (cmnm) group at the wobble position (U34) of certain tRNAs, forming tRNA-cmnm(5)s(2)U34.</text>
</comment>
<comment type="cofactor">
    <cofactor evidence="1">
        <name>FAD</name>
        <dbReference type="ChEBI" id="CHEBI:57692"/>
    </cofactor>
</comment>
<comment type="subunit">
    <text evidence="1">Homodimer. Heterotetramer of two MnmE and two MnmG subunits.</text>
</comment>
<comment type="subcellular location">
    <subcellularLocation>
        <location evidence="1">Cytoplasm</location>
    </subcellularLocation>
</comment>
<comment type="similarity">
    <text evidence="1">Belongs to the MnmG family.</text>
</comment>
<evidence type="ECO:0000255" key="1">
    <source>
        <dbReference type="HAMAP-Rule" id="MF_00129"/>
    </source>
</evidence>
<dbReference type="EMBL" id="CP000901">
    <property type="protein sequence ID" value="ABX88653.1"/>
    <property type="molecule type" value="Genomic_DNA"/>
</dbReference>
<dbReference type="RefSeq" id="WP_002212259.1">
    <property type="nucleotide sequence ID" value="NZ_CP009935.1"/>
</dbReference>
<dbReference type="SMR" id="A9R5U9"/>
<dbReference type="GeneID" id="57974594"/>
<dbReference type="KEGG" id="ypg:YpAngola_A4212"/>
<dbReference type="PATRIC" id="fig|349746.12.peg.948"/>
<dbReference type="GO" id="GO:0005829">
    <property type="term" value="C:cytosol"/>
    <property type="evidence" value="ECO:0007669"/>
    <property type="project" value="TreeGrafter"/>
</dbReference>
<dbReference type="GO" id="GO:0050660">
    <property type="term" value="F:flavin adenine dinucleotide binding"/>
    <property type="evidence" value="ECO:0007669"/>
    <property type="project" value="UniProtKB-UniRule"/>
</dbReference>
<dbReference type="GO" id="GO:0030488">
    <property type="term" value="P:tRNA methylation"/>
    <property type="evidence" value="ECO:0007669"/>
    <property type="project" value="TreeGrafter"/>
</dbReference>
<dbReference type="GO" id="GO:0002098">
    <property type="term" value="P:tRNA wobble uridine modification"/>
    <property type="evidence" value="ECO:0007669"/>
    <property type="project" value="InterPro"/>
</dbReference>
<dbReference type="FunFam" id="1.10.10.1800:FF:000001">
    <property type="entry name" value="tRNA uridine 5-carboxymethylaminomethyl modification enzyme MnmG"/>
    <property type="match status" value="1"/>
</dbReference>
<dbReference type="FunFam" id="1.10.150.570:FF:000001">
    <property type="entry name" value="tRNA uridine 5-carboxymethylaminomethyl modification enzyme MnmG"/>
    <property type="match status" value="1"/>
</dbReference>
<dbReference type="FunFam" id="3.50.50.60:FF:000002">
    <property type="entry name" value="tRNA uridine 5-carboxymethylaminomethyl modification enzyme MnmG"/>
    <property type="match status" value="1"/>
</dbReference>
<dbReference type="FunFam" id="3.50.50.60:FF:000010">
    <property type="entry name" value="tRNA uridine 5-carboxymethylaminomethyl modification enzyme MnmG"/>
    <property type="match status" value="1"/>
</dbReference>
<dbReference type="Gene3D" id="3.50.50.60">
    <property type="entry name" value="FAD/NAD(P)-binding domain"/>
    <property type="match status" value="2"/>
</dbReference>
<dbReference type="Gene3D" id="1.10.150.570">
    <property type="entry name" value="GidA associated domain, C-terminal subdomain"/>
    <property type="match status" value="1"/>
</dbReference>
<dbReference type="Gene3D" id="1.10.10.1800">
    <property type="entry name" value="tRNA uridine 5-carboxymethylaminomethyl modification enzyme MnmG/GidA"/>
    <property type="match status" value="1"/>
</dbReference>
<dbReference type="HAMAP" id="MF_00129">
    <property type="entry name" value="MnmG_GidA"/>
    <property type="match status" value="1"/>
</dbReference>
<dbReference type="InterPro" id="IPR036188">
    <property type="entry name" value="FAD/NAD-bd_sf"/>
</dbReference>
<dbReference type="InterPro" id="IPR049312">
    <property type="entry name" value="GIDA_C_N"/>
</dbReference>
<dbReference type="InterPro" id="IPR004416">
    <property type="entry name" value="MnmG"/>
</dbReference>
<dbReference type="InterPro" id="IPR002218">
    <property type="entry name" value="MnmG-rel"/>
</dbReference>
<dbReference type="InterPro" id="IPR020595">
    <property type="entry name" value="MnmG-rel_CS"/>
</dbReference>
<dbReference type="InterPro" id="IPR026904">
    <property type="entry name" value="MnmG_C"/>
</dbReference>
<dbReference type="InterPro" id="IPR047001">
    <property type="entry name" value="MnmG_C_subdom"/>
</dbReference>
<dbReference type="InterPro" id="IPR044920">
    <property type="entry name" value="MnmG_C_subdom_sf"/>
</dbReference>
<dbReference type="InterPro" id="IPR040131">
    <property type="entry name" value="MnmG_N"/>
</dbReference>
<dbReference type="NCBIfam" id="TIGR00136">
    <property type="entry name" value="mnmG_gidA"/>
    <property type="match status" value="1"/>
</dbReference>
<dbReference type="PANTHER" id="PTHR11806">
    <property type="entry name" value="GLUCOSE INHIBITED DIVISION PROTEIN A"/>
    <property type="match status" value="1"/>
</dbReference>
<dbReference type="PANTHER" id="PTHR11806:SF0">
    <property type="entry name" value="PROTEIN MTO1 HOMOLOG, MITOCHONDRIAL"/>
    <property type="match status" value="1"/>
</dbReference>
<dbReference type="Pfam" id="PF01134">
    <property type="entry name" value="GIDA"/>
    <property type="match status" value="1"/>
</dbReference>
<dbReference type="Pfam" id="PF21680">
    <property type="entry name" value="GIDA_C_1st"/>
    <property type="match status" value="1"/>
</dbReference>
<dbReference type="Pfam" id="PF13932">
    <property type="entry name" value="SAM_GIDA_C"/>
    <property type="match status" value="1"/>
</dbReference>
<dbReference type="SMART" id="SM01228">
    <property type="entry name" value="GIDA_assoc_3"/>
    <property type="match status" value="1"/>
</dbReference>
<dbReference type="SUPFAM" id="SSF51905">
    <property type="entry name" value="FAD/NAD(P)-binding domain"/>
    <property type="match status" value="1"/>
</dbReference>
<dbReference type="PROSITE" id="PS01280">
    <property type="entry name" value="GIDA_1"/>
    <property type="match status" value="1"/>
</dbReference>
<dbReference type="PROSITE" id="PS01281">
    <property type="entry name" value="GIDA_2"/>
    <property type="match status" value="1"/>
</dbReference>
<proteinExistence type="inferred from homology"/>
<keyword id="KW-0963">Cytoplasm</keyword>
<keyword id="KW-0274">FAD</keyword>
<keyword id="KW-0285">Flavoprotein</keyword>
<keyword id="KW-0520">NAD</keyword>
<keyword id="KW-0819">tRNA processing</keyword>
<reference key="1">
    <citation type="journal article" date="2010" name="J. Bacteriol.">
        <title>Genome sequence of the deep-rooted Yersinia pestis strain Angola reveals new insights into the evolution and pangenome of the plague bacterium.</title>
        <authorList>
            <person name="Eppinger M."/>
            <person name="Worsham P.L."/>
            <person name="Nikolich M.P."/>
            <person name="Riley D.R."/>
            <person name="Sebastian Y."/>
            <person name="Mou S."/>
            <person name="Achtman M."/>
            <person name="Lindler L.E."/>
            <person name="Ravel J."/>
        </authorList>
    </citation>
    <scope>NUCLEOTIDE SEQUENCE [LARGE SCALE GENOMIC DNA]</scope>
    <source>
        <strain>Angola</strain>
    </source>
</reference>
<name>MNMG_YERPG</name>
<feature type="chain" id="PRO_1000095673" description="tRNA uridine 5-carboxymethylaminomethyl modification enzyme MnmG">
    <location>
        <begin position="1"/>
        <end position="629"/>
    </location>
</feature>
<feature type="binding site" evidence="1">
    <location>
        <begin position="13"/>
        <end position="18"/>
    </location>
    <ligand>
        <name>FAD</name>
        <dbReference type="ChEBI" id="CHEBI:57692"/>
    </ligand>
</feature>
<feature type="binding site" evidence="1">
    <location>
        <position position="125"/>
    </location>
    <ligand>
        <name>FAD</name>
        <dbReference type="ChEBI" id="CHEBI:57692"/>
    </ligand>
</feature>
<feature type="binding site" evidence="1">
    <location>
        <position position="180"/>
    </location>
    <ligand>
        <name>FAD</name>
        <dbReference type="ChEBI" id="CHEBI:57692"/>
    </ligand>
</feature>
<feature type="binding site" evidence="1">
    <location>
        <begin position="273"/>
        <end position="287"/>
    </location>
    <ligand>
        <name>NAD(+)</name>
        <dbReference type="ChEBI" id="CHEBI:57540"/>
    </ligand>
</feature>
<feature type="binding site" evidence="1">
    <location>
        <position position="370"/>
    </location>
    <ligand>
        <name>FAD</name>
        <dbReference type="ChEBI" id="CHEBI:57692"/>
    </ligand>
</feature>
<gene>
    <name evidence="1" type="primary">mnmG</name>
    <name evidence="1" type="synonym">gidA</name>
    <name type="ordered locus">YpAngola_A4212</name>
</gene>
<organism>
    <name type="scientific">Yersinia pestis bv. Antiqua (strain Angola)</name>
    <dbReference type="NCBI Taxonomy" id="349746"/>
    <lineage>
        <taxon>Bacteria</taxon>
        <taxon>Pseudomonadati</taxon>
        <taxon>Pseudomonadota</taxon>
        <taxon>Gammaproteobacteria</taxon>
        <taxon>Enterobacterales</taxon>
        <taxon>Yersiniaceae</taxon>
        <taxon>Yersinia</taxon>
    </lineage>
</organism>
<protein>
    <recommendedName>
        <fullName evidence="1">tRNA uridine 5-carboxymethylaminomethyl modification enzyme MnmG</fullName>
    </recommendedName>
    <alternativeName>
        <fullName evidence="1">Glucose-inhibited division protein A</fullName>
    </alternativeName>
</protein>
<sequence length="629" mass="70039">MFYPDQFDVIIIGGGHAGTEAAMAAARMGRQTLLLTHNIDTLGQMSCNPAIGGIGKGHLVKEIDALGGLMAKATDLAGIQFRILNASKGPAVRATRAQADRVLYRLAVRTALENQPNLMIFQQPVEDLIVENDRVVGAVTQMGLKFRAKAVVLTVGTFLDGKIHIGLENYSGGRAGDPPSISLSQRLRELPLRVNRLKTGTPPRIDARTIDFSQLTPQLGDTPIPVFSFLGNAEQHPEQMACHITYTNEKTHEVIRNNLDRSPMYAGIIEGIGPRYCPSIEDKVMRFADRNSHQIFLEPEGLTSNEIYPNGISTSLPFDVQMQIVRSMKGLENARIIRPGYAIEYDFFDPRDLKPTLESKYIQGLFFAGQINGTTGYEEAAAQGLLAGLNAGRFANEEDGWSPRRDEAYLGVLVDDLSTLGTKEPYRMFTSRAEYRLMLREDNADLRLTETGRKLGLVDDIRWAHFSQKVEQIEKERQRLRDIWVHPHSENVSEINALLKAPLSKEANGEELLRRPEIDYRLLTSLTSFGPALTDPQSADQVEIQVKYEGYITRQQEEIEKQLRNENTLLPVDLDYQQVSGLSNEVIAKLNDHKPSSIGQASRISGITPAAISILLVWLKKQGLLRRSA</sequence>
<accession>A9R5U9</accession>